<protein>
    <recommendedName>
        <fullName>Centrosomal protein of 57 kDa</fullName>
        <shortName>Cep57</shortName>
    </recommendedName>
    <alternativeName>
        <fullName>Translokin</fullName>
    </alternativeName>
</protein>
<sequence length="499" mass="57040">MAAASVSAASDSQFSSVLAEPSRSNGNMVHHSSSPYVLYPPDKPFLNSDLRRSPNKPTFAYPESNSRAIFSALKNLQDKIRRLELERIRAEESVKTLSRETIEYKKVLDEQIQERENSKNEESKHNQELASQLVAAENKCNLLEKQLEYMRNMIKHAEMERTSVLEKQVSLERERQHDQSHVQSQLEKLDLLEQEYNRLTAMQALAEKKMQELESKLHEEEQERKRMQARAAELQSGIEANRLIFEDRNTSCVSTSTRKIKKKKSKPPEKKGFRNNFGAQPHYRLCLGDMPFVAGTSTSPSHAVVANVQHVLHLMKHHSRALCNDRVVNSVPLAKQACSRGSKSKKSVAPPSSSVNEELSDVLQTLQDEFGQMSFDHQQLTKLIQESPSEELKDNLECELEALVRRMEAKANQITKVRKYQAQLEKQSTDKQKELKGNKKTLDEEGNSSSRSSVITRTTSKKDFTKQRPGEKSRKNLQLLKDMQTLQNSLQSSNVCWDY</sequence>
<evidence type="ECO:0000250" key="1"/>
<evidence type="ECO:0000250" key="2">
    <source>
        <dbReference type="UniProtKB" id="Q86XR8"/>
    </source>
</evidence>
<evidence type="ECO:0000255" key="3"/>
<evidence type="ECO:0000256" key="4">
    <source>
        <dbReference type="SAM" id="MobiDB-lite"/>
    </source>
</evidence>
<evidence type="ECO:0000269" key="5">
    <source>
    </source>
</evidence>
<evidence type="ECO:0000305" key="6"/>
<reference key="1">
    <citation type="submission" date="2005-09" db="EMBL/GenBank/DDBJ databases">
        <authorList>
            <person name="Mural R.J."/>
            <person name="Adams M.D."/>
            <person name="Myers E.W."/>
            <person name="Smith H.O."/>
            <person name="Venter J.C."/>
        </authorList>
    </citation>
    <scope>NUCLEOTIDE SEQUENCE [LARGE SCALE GENOMIC DNA]</scope>
    <source>
        <strain>Brown Norway</strain>
    </source>
</reference>
<reference key="2">
    <citation type="journal article" date="2004" name="Genome Res.">
        <title>The status, quality, and expansion of the NIH full-length cDNA project: the Mammalian Gene Collection (MGC).</title>
        <authorList>
            <consortium name="The MGC Project Team"/>
        </authorList>
    </citation>
    <scope>NUCLEOTIDE SEQUENCE [LARGE SCALE MRNA]</scope>
    <source>
        <tissue>Testis</tissue>
    </source>
</reference>
<reference key="3">
    <citation type="journal article" date="2008" name="Biochem. J.">
        <title>Cep57, a multidomain protein with unique microtubule and centrosomal localization domains.</title>
        <authorList>
            <person name="Momotani K."/>
            <person name="Khromov A.S."/>
            <person name="Miyake T."/>
            <person name="Stukenberg P.T."/>
            <person name="Somlyo A.V."/>
        </authorList>
    </citation>
    <scope>TISSUE SPECIFICITY</scope>
</reference>
<dbReference type="EMBL" id="BC168198">
    <property type="protein sequence ID" value="AAI68198.1"/>
    <property type="status" value="ALT_INIT"/>
    <property type="molecule type" value="mRNA"/>
</dbReference>
<dbReference type="EMBL" id="CH473993">
    <property type="protein sequence ID" value="EDL78488.1"/>
    <property type="status" value="ALT_SEQ"/>
    <property type="molecule type" value="Genomic_DNA"/>
</dbReference>
<dbReference type="RefSeq" id="NP_001101594.2">
    <property type="nucleotide sequence ID" value="NM_001108124.3"/>
</dbReference>
<dbReference type="RefSeq" id="XP_006242585.1">
    <property type="nucleotide sequence ID" value="XM_006242523.3"/>
</dbReference>
<dbReference type="RefSeq" id="XP_006242586.1">
    <property type="nucleotide sequence ID" value="XM_006242524.3"/>
</dbReference>
<dbReference type="SMR" id="B4F7A7"/>
<dbReference type="FunCoup" id="B4F7A7">
    <property type="interactions" value="3470"/>
</dbReference>
<dbReference type="STRING" id="10116.ENSRNOP00000009318"/>
<dbReference type="PhosphoSitePlus" id="B4F7A7"/>
<dbReference type="PaxDb" id="10116-ENSRNOP00000009318"/>
<dbReference type="Ensembl" id="ENSRNOT00000009318.7">
    <property type="protein sequence ID" value="ENSRNOP00000009318.5"/>
    <property type="gene ID" value="ENSRNOG00000006792.7"/>
</dbReference>
<dbReference type="GeneID" id="315423"/>
<dbReference type="KEGG" id="rno:315423"/>
<dbReference type="UCSC" id="RGD:1309884">
    <property type="organism name" value="rat"/>
</dbReference>
<dbReference type="AGR" id="RGD:1309884"/>
<dbReference type="CTD" id="9702"/>
<dbReference type="RGD" id="1309884">
    <property type="gene designation" value="Cep57"/>
</dbReference>
<dbReference type="eggNOG" id="ENOG502QTZR">
    <property type="taxonomic scope" value="Eukaryota"/>
</dbReference>
<dbReference type="GeneTree" id="ENSGT00530000063695"/>
<dbReference type="HOGENOM" id="CLU_034321_2_0_1"/>
<dbReference type="InParanoid" id="B4F7A7"/>
<dbReference type="OMA" id="TQNNAEM"/>
<dbReference type="OrthoDB" id="76453at2759"/>
<dbReference type="PhylomeDB" id="B4F7A7"/>
<dbReference type="TreeFam" id="TF329178"/>
<dbReference type="Reactome" id="R-RNO-2565942">
    <property type="pathway name" value="Regulation of PLK1 Activity at G2/M Transition"/>
</dbReference>
<dbReference type="Reactome" id="R-RNO-380259">
    <property type="pathway name" value="Loss of Nlp from mitotic centrosomes"/>
</dbReference>
<dbReference type="Reactome" id="R-RNO-380270">
    <property type="pathway name" value="Recruitment of mitotic centrosome proteins and complexes"/>
</dbReference>
<dbReference type="Reactome" id="R-RNO-380284">
    <property type="pathway name" value="Loss of proteins required for interphase microtubule organization from the centrosome"/>
</dbReference>
<dbReference type="Reactome" id="R-RNO-380320">
    <property type="pathway name" value="Recruitment of NuMA to mitotic centrosomes"/>
</dbReference>
<dbReference type="Reactome" id="R-RNO-5620912">
    <property type="pathway name" value="Anchoring of the basal body to the plasma membrane"/>
</dbReference>
<dbReference type="Reactome" id="R-RNO-8854518">
    <property type="pathway name" value="AURKA Activation by TPX2"/>
</dbReference>
<dbReference type="PRO" id="PR:B4F7A7"/>
<dbReference type="Proteomes" id="UP000002494">
    <property type="component" value="Chromosome 8"/>
</dbReference>
<dbReference type="Proteomes" id="UP000234681">
    <property type="component" value="Chromosome 8"/>
</dbReference>
<dbReference type="Bgee" id="ENSRNOG00000006792">
    <property type="expression patterns" value="Expressed in testis and 19 other cell types or tissues"/>
</dbReference>
<dbReference type="GO" id="GO:0034451">
    <property type="term" value="C:centriolar satellite"/>
    <property type="evidence" value="ECO:0007669"/>
    <property type="project" value="Ensembl"/>
</dbReference>
<dbReference type="GO" id="GO:0005813">
    <property type="term" value="C:centrosome"/>
    <property type="evidence" value="ECO:0000266"/>
    <property type="project" value="RGD"/>
</dbReference>
<dbReference type="GO" id="GO:0005737">
    <property type="term" value="C:cytoplasm"/>
    <property type="evidence" value="ECO:0000266"/>
    <property type="project" value="RGD"/>
</dbReference>
<dbReference type="GO" id="GO:0005829">
    <property type="term" value="C:cytosol"/>
    <property type="evidence" value="ECO:0007669"/>
    <property type="project" value="Ensembl"/>
</dbReference>
<dbReference type="GO" id="GO:0005794">
    <property type="term" value="C:Golgi apparatus"/>
    <property type="evidence" value="ECO:0000266"/>
    <property type="project" value="RGD"/>
</dbReference>
<dbReference type="GO" id="GO:0005874">
    <property type="term" value="C:microtubule"/>
    <property type="evidence" value="ECO:0000266"/>
    <property type="project" value="RGD"/>
</dbReference>
<dbReference type="GO" id="GO:0005634">
    <property type="term" value="C:nucleus"/>
    <property type="evidence" value="ECO:0000266"/>
    <property type="project" value="RGD"/>
</dbReference>
<dbReference type="GO" id="GO:0017134">
    <property type="term" value="F:fibroblast growth factor binding"/>
    <property type="evidence" value="ECO:0000266"/>
    <property type="project" value="RGD"/>
</dbReference>
<dbReference type="GO" id="GO:0043015">
    <property type="term" value="F:gamma-tubulin binding"/>
    <property type="evidence" value="ECO:0007669"/>
    <property type="project" value="InterPro"/>
</dbReference>
<dbReference type="GO" id="GO:0008017">
    <property type="term" value="F:microtubule binding"/>
    <property type="evidence" value="ECO:0000266"/>
    <property type="project" value="RGD"/>
</dbReference>
<dbReference type="GO" id="GO:0042803">
    <property type="term" value="F:protein homodimerization activity"/>
    <property type="evidence" value="ECO:0000266"/>
    <property type="project" value="RGD"/>
</dbReference>
<dbReference type="GO" id="GO:0008543">
    <property type="term" value="P:fibroblast growth factor receptor signaling pathway"/>
    <property type="evidence" value="ECO:0000266"/>
    <property type="project" value="RGD"/>
</dbReference>
<dbReference type="GO" id="GO:0051260">
    <property type="term" value="P:protein homooligomerization"/>
    <property type="evidence" value="ECO:0000266"/>
    <property type="project" value="RGD"/>
</dbReference>
<dbReference type="GO" id="GO:0007286">
    <property type="term" value="P:spermatid development"/>
    <property type="evidence" value="ECO:0000266"/>
    <property type="project" value="RGD"/>
</dbReference>
<dbReference type="FunFam" id="1.20.58.90:FF:000003">
    <property type="entry name" value="Centrosomal protein of 57 kDa"/>
    <property type="match status" value="1"/>
</dbReference>
<dbReference type="Gene3D" id="1.20.58.90">
    <property type="match status" value="1"/>
</dbReference>
<dbReference type="InterPro" id="IPR051756">
    <property type="entry name" value="Centrosomal_MT-associated"/>
</dbReference>
<dbReference type="InterPro" id="IPR025913">
    <property type="entry name" value="Cep57_CLD"/>
</dbReference>
<dbReference type="InterPro" id="IPR024957">
    <property type="entry name" value="Cep57_MT-bd_dom"/>
</dbReference>
<dbReference type="PANTHER" id="PTHR19336:SF11">
    <property type="entry name" value="CENTROSOMAL PROTEIN OF 57 KDA"/>
    <property type="match status" value="1"/>
</dbReference>
<dbReference type="PANTHER" id="PTHR19336">
    <property type="entry name" value="UNCHARACTERIZED DUF1167"/>
    <property type="match status" value="1"/>
</dbReference>
<dbReference type="Pfam" id="PF14073">
    <property type="entry name" value="Cep57_CLD"/>
    <property type="match status" value="1"/>
</dbReference>
<dbReference type="Pfam" id="PF06657">
    <property type="entry name" value="Cep57_MT_bd"/>
    <property type="match status" value="1"/>
</dbReference>
<keyword id="KW-0175">Coiled coil</keyword>
<keyword id="KW-0963">Cytoplasm</keyword>
<keyword id="KW-0206">Cytoskeleton</keyword>
<keyword id="KW-0493">Microtubule</keyword>
<keyword id="KW-0539">Nucleus</keyword>
<keyword id="KW-0597">Phosphoprotein</keyword>
<keyword id="KW-1185">Reference proteome</keyword>
<proteinExistence type="evidence at protein level"/>
<name>CEP57_RAT</name>
<feature type="chain" id="PRO_0000381817" description="Centrosomal protein of 57 kDa">
    <location>
        <begin position="1"/>
        <end position="499"/>
    </location>
</feature>
<feature type="region of interest" description="Disordered" evidence="4">
    <location>
        <begin position="1"/>
        <end position="41"/>
    </location>
</feature>
<feature type="region of interest" description="centrosome localization domain (CLD)" evidence="1">
    <location>
        <begin position="58"/>
        <end position="239"/>
    </location>
</feature>
<feature type="region of interest" description="Disordered" evidence="4">
    <location>
        <begin position="255"/>
        <end position="275"/>
    </location>
</feature>
<feature type="region of interest" description="Mediates interaction with microtubules" evidence="1">
    <location>
        <begin position="278"/>
        <end position="490"/>
    </location>
</feature>
<feature type="region of interest" description="Disordered" evidence="4">
    <location>
        <begin position="424"/>
        <end position="476"/>
    </location>
</feature>
<feature type="coiled-coil region" evidence="3">
    <location>
        <begin position="63"/>
        <end position="242"/>
    </location>
</feature>
<feature type="coiled-coil region" evidence="3">
    <location>
        <begin position="388"/>
        <end position="491"/>
    </location>
</feature>
<feature type="compositionally biased region" description="Low complexity" evidence="4">
    <location>
        <begin position="1"/>
        <end position="16"/>
    </location>
</feature>
<feature type="compositionally biased region" description="Polar residues" evidence="4">
    <location>
        <begin position="22"/>
        <end position="35"/>
    </location>
</feature>
<feature type="compositionally biased region" description="Basic and acidic residues" evidence="4">
    <location>
        <begin position="427"/>
        <end position="443"/>
    </location>
</feature>
<feature type="compositionally biased region" description="Low complexity" evidence="4">
    <location>
        <begin position="448"/>
        <end position="458"/>
    </location>
</feature>
<feature type="compositionally biased region" description="Basic and acidic residues" evidence="4">
    <location>
        <begin position="460"/>
        <end position="474"/>
    </location>
</feature>
<feature type="modified residue" description="Phosphoserine" evidence="2">
    <location>
        <position position="53"/>
    </location>
</feature>
<gene>
    <name type="primary">Cep57</name>
</gene>
<accession>B4F7A7</accession>
<organism>
    <name type="scientific">Rattus norvegicus</name>
    <name type="common">Rat</name>
    <dbReference type="NCBI Taxonomy" id="10116"/>
    <lineage>
        <taxon>Eukaryota</taxon>
        <taxon>Metazoa</taxon>
        <taxon>Chordata</taxon>
        <taxon>Craniata</taxon>
        <taxon>Vertebrata</taxon>
        <taxon>Euteleostomi</taxon>
        <taxon>Mammalia</taxon>
        <taxon>Eutheria</taxon>
        <taxon>Euarchontoglires</taxon>
        <taxon>Glires</taxon>
        <taxon>Rodentia</taxon>
        <taxon>Myomorpha</taxon>
        <taxon>Muroidea</taxon>
        <taxon>Muridae</taxon>
        <taxon>Murinae</taxon>
        <taxon>Rattus</taxon>
    </lineage>
</organism>
<comment type="function">
    <text evidence="1">Centrosomal protein which may be required for microtubule attachment to centrosomes. May act by forming ring-like structures around microtubules. Mediates nuclear translocation and mitogenic activity of the internalized growth factor FGF2 (By similarity).</text>
</comment>
<comment type="subunit">
    <text evidence="1">Homodimer and homooligomer. Interacts with FGF2 and RAP80. Does not interact with FGF1 or FGF2 isoform 24 kDa. Interacts with microtubules (By similarity).</text>
</comment>
<comment type="subcellular location">
    <subcellularLocation>
        <location evidence="1">Nucleus</location>
    </subcellularLocation>
    <subcellularLocation>
        <location evidence="1">Cytoplasm</location>
    </subcellularLocation>
    <subcellularLocation>
        <location evidence="1">Cytoplasm</location>
        <location evidence="1">Cytoskeleton</location>
        <location evidence="1">Microtubule organizing center</location>
        <location evidence="1">Centrosome</location>
    </subcellularLocation>
</comment>
<comment type="tissue specificity">
    <text evidence="5">Ubiquitous (at protein level).</text>
</comment>
<comment type="domain">
    <text evidence="1">The C-terminal region mediates the interaction with microtubules and is able to nucleate and bundles microtubules in vitro.</text>
</comment>
<comment type="domain">
    <text evidence="1">The centrosome localization domain (CLD) region mediates the localization to centrosomes and homooligomerization.</text>
</comment>
<comment type="similarity">
    <text evidence="6">Belongs to the translokin family.</text>
</comment>
<comment type="sequence caution" evidence="6">
    <conflict type="erroneous initiation">
        <sequence resource="EMBL-CDS" id="AAI68198"/>
    </conflict>
</comment>
<comment type="sequence caution" evidence="6">
    <conflict type="erroneous gene model prediction">
        <sequence resource="EMBL-CDS" id="EDL78488"/>
    </conflict>
</comment>